<reference key="1">
    <citation type="journal article" date="2007" name="PLoS Genet.">
        <title>Genome analysis of Minibacterium massiliensis highlights the convergent evolution of water-living bacteria.</title>
        <authorList>
            <person name="Audic S."/>
            <person name="Robert C."/>
            <person name="Campagna B."/>
            <person name="Parinello H."/>
            <person name="Claverie J.-M."/>
            <person name="Raoult D."/>
            <person name="Drancourt M."/>
        </authorList>
    </citation>
    <scope>NUCLEOTIDE SEQUENCE [LARGE SCALE GENOMIC DNA]</scope>
    <source>
        <strain>Marseille</strain>
    </source>
</reference>
<gene>
    <name evidence="1" type="primary">mutL</name>
    <name type="ordered locus">mma_0462</name>
</gene>
<feature type="chain" id="PRO_1000010025" description="DNA mismatch repair protein MutL">
    <location>
        <begin position="1"/>
        <end position="613"/>
    </location>
</feature>
<organism>
    <name type="scientific">Janthinobacterium sp. (strain Marseille)</name>
    <name type="common">Minibacterium massiliensis</name>
    <dbReference type="NCBI Taxonomy" id="375286"/>
    <lineage>
        <taxon>Bacteria</taxon>
        <taxon>Pseudomonadati</taxon>
        <taxon>Pseudomonadota</taxon>
        <taxon>Betaproteobacteria</taxon>
        <taxon>Burkholderiales</taxon>
        <taxon>Oxalobacteraceae</taxon>
        <taxon>Janthinobacterium</taxon>
    </lineage>
</organism>
<protein>
    <recommendedName>
        <fullName evidence="1">DNA mismatch repair protein MutL</fullName>
    </recommendedName>
</protein>
<accession>A6SV55</accession>
<sequence>MHATTQPFRPIQPLSDQLISQIAAGEVVERPSAVVKELLENALDAGATAITVRLEQGGVKRIAITDNGRGITPEQLPLALARHATSKINSLNELENVGTLGFRGEALASIASVAQLTLTSRTADAQHAWEISGVQGSDQKNTVAPSSGAPGTTVDVQDLYFNTPARRKFLKTEQTEFGHCAEVVRRIALSRPDVAFSLSHNGKTVDHWAVNDIAKRSAHILGSEFSGARLPLEETAGPLHLHGFIGLPTASKARGDAQYFYVNGRFVRDKLLMHAVRSAYQDVLHGDRYPSYVISLDLDPALVDVNVHPSKIEVRFRDSRSVHQFVFHAVSRALAQTSATAFGAVPSPTPAPSGALPWLREQQQTTFAPQFQQQYGVAQTTANYGALFNTDGAVTPLGTEPAPAFAAFTNSPAQTMSDDEFPLGFALAQLHGIFILAQNTKGLVLVDMHAAHERILYEQLKNALDDNAMQVQPLLIPITFYADDVEVGTAEDSKETLLSLGFDIAVMSPTTLAIRAVPTLLKNADAQSLARDVLRDVREYGGSRVLVERRNELLGTLACHTAVRANRMLTGPEMNALLRQMEATERADQCNHGRPTWVQLGLSDLDKLFERGR</sequence>
<evidence type="ECO:0000255" key="1">
    <source>
        <dbReference type="HAMAP-Rule" id="MF_00149"/>
    </source>
</evidence>
<comment type="function">
    <text evidence="1">This protein is involved in the repair of mismatches in DNA. It is required for dam-dependent methyl-directed DNA mismatch repair. May act as a 'molecular matchmaker', a protein that promotes the formation of a stable complex between two or more DNA-binding proteins in an ATP-dependent manner without itself being part of a final effector complex.</text>
</comment>
<comment type="similarity">
    <text evidence="1">Belongs to the DNA mismatch repair MutL/HexB family.</text>
</comment>
<proteinExistence type="inferred from homology"/>
<name>MUTL_JANMA</name>
<dbReference type="EMBL" id="CP000269">
    <property type="protein sequence ID" value="ABR88766.1"/>
    <property type="molecule type" value="Genomic_DNA"/>
</dbReference>
<dbReference type="RefSeq" id="WP_012078327.1">
    <property type="nucleotide sequence ID" value="NC_009659.1"/>
</dbReference>
<dbReference type="SMR" id="A6SV55"/>
<dbReference type="STRING" id="375286.mma_0462"/>
<dbReference type="KEGG" id="mms:mma_0462"/>
<dbReference type="eggNOG" id="COG0323">
    <property type="taxonomic scope" value="Bacteria"/>
</dbReference>
<dbReference type="HOGENOM" id="CLU_004131_4_2_4"/>
<dbReference type="OrthoDB" id="9763467at2"/>
<dbReference type="Proteomes" id="UP000006388">
    <property type="component" value="Chromosome"/>
</dbReference>
<dbReference type="GO" id="GO:0032300">
    <property type="term" value="C:mismatch repair complex"/>
    <property type="evidence" value="ECO:0007669"/>
    <property type="project" value="InterPro"/>
</dbReference>
<dbReference type="GO" id="GO:0005524">
    <property type="term" value="F:ATP binding"/>
    <property type="evidence" value="ECO:0007669"/>
    <property type="project" value="InterPro"/>
</dbReference>
<dbReference type="GO" id="GO:0016887">
    <property type="term" value="F:ATP hydrolysis activity"/>
    <property type="evidence" value="ECO:0007669"/>
    <property type="project" value="InterPro"/>
</dbReference>
<dbReference type="GO" id="GO:0140664">
    <property type="term" value="F:ATP-dependent DNA damage sensor activity"/>
    <property type="evidence" value="ECO:0007669"/>
    <property type="project" value="InterPro"/>
</dbReference>
<dbReference type="GO" id="GO:0030983">
    <property type="term" value="F:mismatched DNA binding"/>
    <property type="evidence" value="ECO:0007669"/>
    <property type="project" value="InterPro"/>
</dbReference>
<dbReference type="GO" id="GO:0006298">
    <property type="term" value="P:mismatch repair"/>
    <property type="evidence" value="ECO:0007669"/>
    <property type="project" value="UniProtKB-UniRule"/>
</dbReference>
<dbReference type="CDD" id="cd16926">
    <property type="entry name" value="HATPase_MutL-MLH-PMS-like"/>
    <property type="match status" value="1"/>
</dbReference>
<dbReference type="CDD" id="cd03482">
    <property type="entry name" value="MutL_Trans_MutL"/>
    <property type="match status" value="1"/>
</dbReference>
<dbReference type="FunFam" id="3.30.565.10:FF:000003">
    <property type="entry name" value="DNA mismatch repair endonuclease MutL"/>
    <property type="match status" value="1"/>
</dbReference>
<dbReference type="Gene3D" id="3.30.230.10">
    <property type="match status" value="1"/>
</dbReference>
<dbReference type="Gene3D" id="3.30.565.10">
    <property type="entry name" value="Histidine kinase-like ATPase, C-terminal domain"/>
    <property type="match status" value="1"/>
</dbReference>
<dbReference type="Gene3D" id="3.30.1540.20">
    <property type="entry name" value="MutL, C-terminal domain, dimerisation subdomain"/>
    <property type="match status" value="1"/>
</dbReference>
<dbReference type="Gene3D" id="3.30.1370.100">
    <property type="entry name" value="MutL, C-terminal domain, regulatory subdomain"/>
    <property type="match status" value="1"/>
</dbReference>
<dbReference type="HAMAP" id="MF_00149">
    <property type="entry name" value="DNA_mis_repair"/>
    <property type="match status" value="1"/>
</dbReference>
<dbReference type="InterPro" id="IPR014762">
    <property type="entry name" value="DNA_mismatch_repair_CS"/>
</dbReference>
<dbReference type="InterPro" id="IPR020667">
    <property type="entry name" value="DNA_mismatch_repair_MutL"/>
</dbReference>
<dbReference type="InterPro" id="IPR013507">
    <property type="entry name" value="DNA_mismatch_S5_2-like"/>
</dbReference>
<dbReference type="InterPro" id="IPR036890">
    <property type="entry name" value="HATPase_C_sf"/>
</dbReference>
<dbReference type="InterPro" id="IPR002099">
    <property type="entry name" value="MutL/Mlh/PMS"/>
</dbReference>
<dbReference type="InterPro" id="IPR038973">
    <property type="entry name" value="MutL/Mlh/Pms-like"/>
</dbReference>
<dbReference type="InterPro" id="IPR014790">
    <property type="entry name" value="MutL_C"/>
</dbReference>
<dbReference type="InterPro" id="IPR042120">
    <property type="entry name" value="MutL_C_dimsub"/>
</dbReference>
<dbReference type="InterPro" id="IPR042121">
    <property type="entry name" value="MutL_C_regsub"/>
</dbReference>
<dbReference type="InterPro" id="IPR037198">
    <property type="entry name" value="MutL_C_sf"/>
</dbReference>
<dbReference type="InterPro" id="IPR020568">
    <property type="entry name" value="Ribosomal_Su5_D2-typ_SF"/>
</dbReference>
<dbReference type="InterPro" id="IPR014721">
    <property type="entry name" value="Ribsml_uS5_D2-typ_fold_subgr"/>
</dbReference>
<dbReference type="NCBIfam" id="TIGR00585">
    <property type="entry name" value="mutl"/>
    <property type="match status" value="1"/>
</dbReference>
<dbReference type="PANTHER" id="PTHR10073">
    <property type="entry name" value="DNA MISMATCH REPAIR PROTEIN MLH, PMS, MUTL"/>
    <property type="match status" value="1"/>
</dbReference>
<dbReference type="PANTHER" id="PTHR10073:SF12">
    <property type="entry name" value="DNA MISMATCH REPAIR PROTEIN MLH1"/>
    <property type="match status" value="1"/>
</dbReference>
<dbReference type="Pfam" id="PF01119">
    <property type="entry name" value="DNA_mis_repair"/>
    <property type="match status" value="1"/>
</dbReference>
<dbReference type="Pfam" id="PF13589">
    <property type="entry name" value="HATPase_c_3"/>
    <property type="match status" value="1"/>
</dbReference>
<dbReference type="Pfam" id="PF08676">
    <property type="entry name" value="MutL_C"/>
    <property type="match status" value="1"/>
</dbReference>
<dbReference type="SMART" id="SM01340">
    <property type="entry name" value="DNA_mis_repair"/>
    <property type="match status" value="1"/>
</dbReference>
<dbReference type="SMART" id="SM00853">
    <property type="entry name" value="MutL_C"/>
    <property type="match status" value="1"/>
</dbReference>
<dbReference type="SUPFAM" id="SSF55874">
    <property type="entry name" value="ATPase domain of HSP90 chaperone/DNA topoisomerase II/histidine kinase"/>
    <property type="match status" value="1"/>
</dbReference>
<dbReference type="SUPFAM" id="SSF118116">
    <property type="entry name" value="DNA mismatch repair protein MutL"/>
    <property type="match status" value="1"/>
</dbReference>
<dbReference type="SUPFAM" id="SSF54211">
    <property type="entry name" value="Ribosomal protein S5 domain 2-like"/>
    <property type="match status" value="1"/>
</dbReference>
<dbReference type="PROSITE" id="PS00058">
    <property type="entry name" value="DNA_MISMATCH_REPAIR_1"/>
    <property type="match status" value="1"/>
</dbReference>
<keyword id="KW-0227">DNA damage</keyword>
<keyword id="KW-0234">DNA repair</keyword>